<reference key="1">
    <citation type="journal article" date="2003" name="J. Bacteriol.">
        <title>Comparative analyses of the complete genome sequences of Pierce's disease and citrus variegated chlorosis strains of Xylella fastidiosa.</title>
        <authorList>
            <person name="Van Sluys M.A."/>
            <person name="de Oliveira M.C."/>
            <person name="Monteiro-Vitorello C.B."/>
            <person name="Miyaki C.Y."/>
            <person name="Furlan L.R."/>
            <person name="Camargo L.E.A."/>
            <person name="da Silva A.C.R."/>
            <person name="Moon D.H."/>
            <person name="Takita M.A."/>
            <person name="Lemos E.G.M."/>
            <person name="Machado M.A."/>
            <person name="Ferro M.I.T."/>
            <person name="da Silva F.R."/>
            <person name="Goldman M.H.S."/>
            <person name="Goldman G.H."/>
            <person name="Lemos M.V.F."/>
            <person name="El-Dorry H."/>
            <person name="Tsai S.M."/>
            <person name="Carrer H."/>
            <person name="Carraro D.M."/>
            <person name="de Oliveira R.C."/>
            <person name="Nunes L.R."/>
            <person name="Siqueira W.J."/>
            <person name="Coutinho L.L."/>
            <person name="Kimura E.T."/>
            <person name="Ferro E.S."/>
            <person name="Harakava R."/>
            <person name="Kuramae E.E."/>
            <person name="Marino C.L."/>
            <person name="Giglioti E."/>
            <person name="Abreu I.L."/>
            <person name="Alves L.M.C."/>
            <person name="do Amaral A.M."/>
            <person name="Baia G.S."/>
            <person name="Blanco S.R."/>
            <person name="Brito M.S."/>
            <person name="Cannavan F.S."/>
            <person name="Celestino A.V."/>
            <person name="da Cunha A.F."/>
            <person name="Fenille R.C."/>
            <person name="Ferro J.A."/>
            <person name="Formighieri E.F."/>
            <person name="Kishi L.T."/>
            <person name="Leoni S.G."/>
            <person name="Oliveira A.R."/>
            <person name="Rosa V.E. Jr."/>
            <person name="Sassaki F.T."/>
            <person name="Sena J.A.D."/>
            <person name="de Souza A.A."/>
            <person name="Truffi D."/>
            <person name="Tsukumo F."/>
            <person name="Yanai G.M."/>
            <person name="Zaros L.G."/>
            <person name="Civerolo E.L."/>
            <person name="Simpson A.J.G."/>
            <person name="Almeida N.F. Jr."/>
            <person name="Setubal J.C."/>
            <person name="Kitajima J.P."/>
        </authorList>
    </citation>
    <scope>NUCLEOTIDE SEQUENCE [LARGE SCALE GENOMIC DNA]</scope>
    <source>
        <strain>Temecula1 / ATCC 700964</strain>
    </source>
</reference>
<feature type="chain" id="PRO_0000165636" description="Holliday junction branch migration complex subunit RuvB">
    <location>
        <begin position="1"/>
        <end position="343"/>
    </location>
</feature>
<feature type="region of interest" description="Large ATPase domain (RuvB-L)" evidence="1">
    <location>
        <begin position="1"/>
        <end position="181"/>
    </location>
</feature>
<feature type="region of interest" description="Small ATPAse domain (RuvB-S)" evidence="1">
    <location>
        <begin position="182"/>
        <end position="252"/>
    </location>
</feature>
<feature type="region of interest" description="Head domain (RuvB-H)" evidence="1">
    <location>
        <begin position="255"/>
        <end position="343"/>
    </location>
</feature>
<feature type="binding site" evidence="1">
    <location>
        <position position="20"/>
    </location>
    <ligand>
        <name>ATP</name>
        <dbReference type="ChEBI" id="CHEBI:30616"/>
    </ligand>
</feature>
<feature type="binding site" evidence="1">
    <location>
        <position position="21"/>
    </location>
    <ligand>
        <name>ATP</name>
        <dbReference type="ChEBI" id="CHEBI:30616"/>
    </ligand>
</feature>
<feature type="binding site" evidence="1">
    <location>
        <position position="62"/>
    </location>
    <ligand>
        <name>ATP</name>
        <dbReference type="ChEBI" id="CHEBI:30616"/>
    </ligand>
</feature>
<feature type="binding site" evidence="1">
    <location>
        <position position="65"/>
    </location>
    <ligand>
        <name>ATP</name>
        <dbReference type="ChEBI" id="CHEBI:30616"/>
    </ligand>
</feature>
<feature type="binding site" evidence="1">
    <location>
        <position position="66"/>
    </location>
    <ligand>
        <name>ATP</name>
        <dbReference type="ChEBI" id="CHEBI:30616"/>
    </ligand>
</feature>
<feature type="binding site" evidence="1">
    <location>
        <position position="66"/>
    </location>
    <ligand>
        <name>Mg(2+)</name>
        <dbReference type="ChEBI" id="CHEBI:18420"/>
    </ligand>
</feature>
<feature type="binding site" evidence="1">
    <location>
        <position position="67"/>
    </location>
    <ligand>
        <name>ATP</name>
        <dbReference type="ChEBI" id="CHEBI:30616"/>
    </ligand>
</feature>
<feature type="binding site" evidence="1">
    <location>
        <begin position="128"/>
        <end position="130"/>
    </location>
    <ligand>
        <name>ATP</name>
        <dbReference type="ChEBI" id="CHEBI:30616"/>
    </ligand>
</feature>
<feature type="binding site" evidence="1">
    <location>
        <position position="171"/>
    </location>
    <ligand>
        <name>ATP</name>
        <dbReference type="ChEBI" id="CHEBI:30616"/>
    </ligand>
</feature>
<feature type="binding site" evidence="1">
    <location>
        <position position="181"/>
    </location>
    <ligand>
        <name>ATP</name>
        <dbReference type="ChEBI" id="CHEBI:30616"/>
    </ligand>
</feature>
<feature type="binding site" evidence="1">
    <location>
        <position position="218"/>
    </location>
    <ligand>
        <name>ATP</name>
        <dbReference type="ChEBI" id="CHEBI:30616"/>
    </ligand>
</feature>
<feature type="binding site" evidence="1">
    <location>
        <position position="291"/>
    </location>
    <ligand>
        <name>DNA</name>
        <dbReference type="ChEBI" id="CHEBI:16991"/>
    </ligand>
</feature>
<feature type="binding site" evidence="1">
    <location>
        <position position="310"/>
    </location>
    <ligand>
        <name>DNA</name>
        <dbReference type="ChEBI" id="CHEBI:16991"/>
    </ligand>
</feature>
<feature type="binding site" evidence="1">
    <location>
        <position position="315"/>
    </location>
    <ligand>
        <name>DNA</name>
        <dbReference type="ChEBI" id="CHEBI:16991"/>
    </ligand>
</feature>
<gene>
    <name evidence="1" type="primary">ruvB</name>
    <name type="ordered locus">PD_0889</name>
</gene>
<accession>Q87D00</accession>
<keyword id="KW-0067">ATP-binding</keyword>
<keyword id="KW-0963">Cytoplasm</keyword>
<keyword id="KW-0227">DNA damage</keyword>
<keyword id="KW-0233">DNA recombination</keyword>
<keyword id="KW-0234">DNA repair</keyword>
<keyword id="KW-0238">DNA-binding</keyword>
<keyword id="KW-0378">Hydrolase</keyword>
<keyword id="KW-0547">Nucleotide-binding</keyword>
<keyword id="KW-1185">Reference proteome</keyword>
<protein>
    <recommendedName>
        <fullName evidence="1">Holliday junction branch migration complex subunit RuvB</fullName>
        <ecNumber evidence="1">3.6.4.-</ecNumber>
    </recommendedName>
</protein>
<comment type="function">
    <text evidence="1">The RuvA-RuvB-RuvC complex processes Holliday junction (HJ) DNA during genetic recombination and DNA repair, while the RuvA-RuvB complex plays an important role in the rescue of blocked DNA replication forks via replication fork reversal (RFR). RuvA specifically binds to HJ cruciform DNA, conferring on it an open structure. The RuvB hexamer acts as an ATP-dependent pump, pulling dsDNA into and through the RuvAB complex. RuvB forms 2 homohexamers on either side of HJ DNA bound by 1 or 2 RuvA tetramers; 4 subunits per hexamer contact DNA at a time. Coordinated motions by a converter formed by DNA-disengaged RuvB subunits stimulates ATP hydrolysis and nucleotide exchange. Immobilization of the converter enables RuvB to convert the ATP-contained energy into a lever motion, pulling 2 nucleotides of DNA out of the RuvA tetramer per ATP hydrolyzed, thus driving DNA branch migration. The RuvB motors rotate together with the DNA substrate, which together with the progressing nucleotide cycle form the mechanistic basis for DNA recombination by continuous HJ branch migration. Branch migration allows RuvC to scan DNA until it finds its consensus sequence, where it cleaves and resolves cruciform DNA.</text>
</comment>
<comment type="catalytic activity">
    <reaction evidence="1">
        <text>ATP + H2O = ADP + phosphate + H(+)</text>
        <dbReference type="Rhea" id="RHEA:13065"/>
        <dbReference type="ChEBI" id="CHEBI:15377"/>
        <dbReference type="ChEBI" id="CHEBI:15378"/>
        <dbReference type="ChEBI" id="CHEBI:30616"/>
        <dbReference type="ChEBI" id="CHEBI:43474"/>
        <dbReference type="ChEBI" id="CHEBI:456216"/>
    </reaction>
</comment>
<comment type="subunit">
    <text evidence="1">Homohexamer. Forms an RuvA(8)-RuvB(12)-Holliday junction (HJ) complex. HJ DNA is sandwiched between 2 RuvA tetramers; dsDNA enters through RuvA and exits via RuvB. An RuvB hexamer assembles on each DNA strand where it exits the tetramer. Each RuvB hexamer is contacted by two RuvA subunits (via domain III) on 2 adjacent RuvB subunits; this complex drives branch migration. In the full resolvosome a probable DNA-RuvA(4)-RuvB(12)-RuvC(2) complex forms which resolves the HJ.</text>
</comment>
<comment type="subcellular location">
    <subcellularLocation>
        <location evidence="1">Cytoplasm</location>
    </subcellularLocation>
</comment>
<comment type="domain">
    <text evidence="1">Has 3 domains, the large (RuvB-L) and small ATPase (RuvB-S) domains and the C-terminal head (RuvB-H) domain. The head domain binds DNA, while the ATPase domains jointly bind ATP, ADP or are empty depending on the state of the subunit in the translocation cycle. During a single DNA translocation step the structure of each domain remains the same, but their relative positions change.</text>
</comment>
<comment type="similarity">
    <text evidence="1">Belongs to the RuvB family.</text>
</comment>
<organism>
    <name type="scientific">Xylella fastidiosa (strain Temecula1 / ATCC 700964)</name>
    <dbReference type="NCBI Taxonomy" id="183190"/>
    <lineage>
        <taxon>Bacteria</taxon>
        <taxon>Pseudomonadati</taxon>
        <taxon>Pseudomonadota</taxon>
        <taxon>Gammaproteobacteria</taxon>
        <taxon>Lysobacterales</taxon>
        <taxon>Lysobacteraceae</taxon>
        <taxon>Xylella</taxon>
    </lineage>
</organism>
<name>RUVB_XYLFT</name>
<dbReference type="EC" id="3.6.4.-" evidence="1"/>
<dbReference type="EMBL" id="AE009442">
    <property type="protein sequence ID" value="AAO28754.1"/>
    <property type="molecule type" value="Genomic_DNA"/>
</dbReference>
<dbReference type="RefSeq" id="WP_004572899.1">
    <property type="nucleotide sequence ID" value="NC_004556.1"/>
</dbReference>
<dbReference type="SMR" id="Q87D00"/>
<dbReference type="GeneID" id="93904680"/>
<dbReference type="KEGG" id="xft:PD_0889"/>
<dbReference type="HOGENOM" id="CLU_055599_1_0_6"/>
<dbReference type="Proteomes" id="UP000002516">
    <property type="component" value="Chromosome"/>
</dbReference>
<dbReference type="GO" id="GO:0005737">
    <property type="term" value="C:cytoplasm"/>
    <property type="evidence" value="ECO:0007669"/>
    <property type="project" value="UniProtKB-SubCell"/>
</dbReference>
<dbReference type="GO" id="GO:0048476">
    <property type="term" value="C:Holliday junction resolvase complex"/>
    <property type="evidence" value="ECO:0007669"/>
    <property type="project" value="UniProtKB-UniRule"/>
</dbReference>
<dbReference type="GO" id="GO:0005524">
    <property type="term" value="F:ATP binding"/>
    <property type="evidence" value="ECO:0007669"/>
    <property type="project" value="UniProtKB-UniRule"/>
</dbReference>
<dbReference type="GO" id="GO:0016887">
    <property type="term" value="F:ATP hydrolysis activity"/>
    <property type="evidence" value="ECO:0007669"/>
    <property type="project" value="InterPro"/>
</dbReference>
<dbReference type="GO" id="GO:0000400">
    <property type="term" value="F:four-way junction DNA binding"/>
    <property type="evidence" value="ECO:0007669"/>
    <property type="project" value="UniProtKB-UniRule"/>
</dbReference>
<dbReference type="GO" id="GO:0009378">
    <property type="term" value="F:four-way junction helicase activity"/>
    <property type="evidence" value="ECO:0007669"/>
    <property type="project" value="InterPro"/>
</dbReference>
<dbReference type="GO" id="GO:0006310">
    <property type="term" value="P:DNA recombination"/>
    <property type="evidence" value="ECO:0007669"/>
    <property type="project" value="UniProtKB-UniRule"/>
</dbReference>
<dbReference type="GO" id="GO:0006281">
    <property type="term" value="P:DNA repair"/>
    <property type="evidence" value="ECO:0007669"/>
    <property type="project" value="UniProtKB-UniRule"/>
</dbReference>
<dbReference type="CDD" id="cd00009">
    <property type="entry name" value="AAA"/>
    <property type="match status" value="1"/>
</dbReference>
<dbReference type="FunFam" id="3.40.50.300:FF:000073">
    <property type="entry name" value="Holliday junction ATP-dependent DNA helicase RuvB"/>
    <property type="match status" value="1"/>
</dbReference>
<dbReference type="Gene3D" id="1.10.8.60">
    <property type="match status" value="1"/>
</dbReference>
<dbReference type="Gene3D" id="3.40.50.300">
    <property type="entry name" value="P-loop containing nucleotide triphosphate hydrolases"/>
    <property type="match status" value="1"/>
</dbReference>
<dbReference type="Gene3D" id="1.10.10.10">
    <property type="entry name" value="Winged helix-like DNA-binding domain superfamily/Winged helix DNA-binding domain"/>
    <property type="match status" value="1"/>
</dbReference>
<dbReference type="HAMAP" id="MF_00016">
    <property type="entry name" value="DNA_HJ_migration_RuvB"/>
    <property type="match status" value="1"/>
</dbReference>
<dbReference type="InterPro" id="IPR003593">
    <property type="entry name" value="AAA+_ATPase"/>
</dbReference>
<dbReference type="InterPro" id="IPR041445">
    <property type="entry name" value="AAA_lid_4"/>
</dbReference>
<dbReference type="InterPro" id="IPR004605">
    <property type="entry name" value="DNA_helicase_Holl-junc_RuvB"/>
</dbReference>
<dbReference type="InterPro" id="IPR027417">
    <property type="entry name" value="P-loop_NTPase"/>
</dbReference>
<dbReference type="InterPro" id="IPR008824">
    <property type="entry name" value="RuvB-like_N"/>
</dbReference>
<dbReference type="InterPro" id="IPR008823">
    <property type="entry name" value="RuvB_C"/>
</dbReference>
<dbReference type="InterPro" id="IPR036388">
    <property type="entry name" value="WH-like_DNA-bd_sf"/>
</dbReference>
<dbReference type="InterPro" id="IPR036390">
    <property type="entry name" value="WH_DNA-bd_sf"/>
</dbReference>
<dbReference type="NCBIfam" id="NF000868">
    <property type="entry name" value="PRK00080.1"/>
    <property type="match status" value="1"/>
</dbReference>
<dbReference type="NCBIfam" id="TIGR00635">
    <property type="entry name" value="ruvB"/>
    <property type="match status" value="1"/>
</dbReference>
<dbReference type="PANTHER" id="PTHR42848">
    <property type="match status" value="1"/>
</dbReference>
<dbReference type="PANTHER" id="PTHR42848:SF1">
    <property type="entry name" value="HOLLIDAY JUNCTION BRANCH MIGRATION COMPLEX SUBUNIT RUVB"/>
    <property type="match status" value="1"/>
</dbReference>
<dbReference type="Pfam" id="PF17864">
    <property type="entry name" value="AAA_lid_4"/>
    <property type="match status" value="1"/>
</dbReference>
<dbReference type="Pfam" id="PF05491">
    <property type="entry name" value="RuvB_C"/>
    <property type="match status" value="1"/>
</dbReference>
<dbReference type="Pfam" id="PF05496">
    <property type="entry name" value="RuvB_N"/>
    <property type="match status" value="1"/>
</dbReference>
<dbReference type="SMART" id="SM00382">
    <property type="entry name" value="AAA"/>
    <property type="match status" value="1"/>
</dbReference>
<dbReference type="SUPFAM" id="SSF52540">
    <property type="entry name" value="P-loop containing nucleoside triphosphate hydrolases"/>
    <property type="match status" value="1"/>
</dbReference>
<dbReference type="SUPFAM" id="SSF46785">
    <property type="entry name" value="Winged helix' DNA-binding domain"/>
    <property type="match status" value="1"/>
</dbReference>
<sequence>MDRIIDSAATREDEAIEVSIRPKRLADYLGQQPVREQMDIYIQATKARAEALDHVLIFGPPGLGKTTLSHVIAYELGVKLRVTSGPVIEKAGDLAALLTNLQPYDVLFIDEIHRLSPVVEEVLYPAMEDFQIDIMIGEGPAARSIKIDLPPFTLIGATTRTGLLTAPLRDRFGIVQRLEFYSPEDLARIVRRSAGILNIDCTTEGAAEIAQRARGTPRIANRLLRRVRDYAEVKADGQITIEVAQAAMQMLKVDQGGFDELDRRLLHTIVEYFDGGPVGIESLAASLSEERGTLEDVVEPYLIQQGFLVRTARGRMATDKAYQHLALQPRERVSAFTDPEDLF</sequence>
<proteinExistence type="inferred from homology"/>
<evidence type="ECO:0000255" key="1">
    <source>
        <dbReference type="HAMAP-Rule" id="MF_00016"/>
    </source>
</evidence>